<accession>A9WIA0</accession>
<proteinExistence type="inferred from homology"/>
<dbReference type="EC" id="5.3.1.6" evidence="1"/>
<dbReference type="EMBL" id="CP000909">
    <property type="protein sequence ID" value="ABY36392.1"/>
    <property type="molecule type" value="Genomic_DNA"/>
</dbReference>
<dbReference type="RefSeq" id="WP_012259045.1">
    <property type="nucleotide sequence ID" value="NC_010175.1"/>
</dbReference>
<dbReference type="RefSeq" id="YP_001636781.1">
    <property type="nucleotide sequence ID" value="NC_010175.1"/>
</dbReference>
<dbReference type="SMR" id="A9WIA0"/>
<dbReference type="STRING" id="324602.Caur_3198"/>
<dbReference type="EnsemblBacteria" id="ABY36392">
    <property type="protein sequence ID" value="ABY36392"/>
    <property type="gene ID" value="Caur_3198"/>
</dbReference>
<dbReference type="KEGG" id="cau:Caur_3198"/>
<dbReference type="PATRIC" id="fig|324602.8.peg.3610"/>
<dbReference type="eggNOG" id="COG0120">
    <property type="taxonomic scope" value="Bacteria"/>
</dbReference>
<dbReference type="HOGENOM" id="CLU_056590_1_1_0"/>
<dbReference type="InParanoid" id="A9WIA0"/>
<dbReference type="UniPathway" id="UPA00115">
    <property type="reaction ID" value="UER00412"/>
</dbReference>
<dbReference type="Proteomes" id="UP000002008">
    <property type="component" value="Chromosome"/>
</dbReference>
<dbReference type="GO" id="GO:0004751">
    <property type="term" value="F:ribose-5-phosphate isomerase activity"/>
    <property type="evidence" value="ECO:0007669"/>
    <property type="project" value="UniProtKB-UniRule"/>
</dbReference>
<dbReference type="GO" id="GO:0009052">
    <property type="term" value="P:pentose-phosphate shunt, non-oxidative branch"/>
    <property type="evidence" value="ECO:0007669"/>
    <property type="project" value="UniProtKB-UniRule"/>
</dbReference>
<dbReference type="CDD" id="cd01398">
    <property type="entry name" value="RPI_A"/>
    <property type="match status" value="1"/>
</dbReference>
<dbReference type="FunFam" id="3.40.50.1360:FF:000001">
    <property type="entry name" value="Ribose-5-phosphate isomerase A"/>
    <property type="match status" value="1"/>
</dbReference>
<dbReference type="Gene3D" id="3.30.70.260">
    <property type="match status" value="1"/>
</dbReference>
<dbReference type="Gene3D" id="3.40.50.1360">
    <property type="match status" value="1"/>
</dbReference>
<dbReference type="HAMAP" id="MF_00170">
    <property type="entry name" value="Rib_5P_isom_A"/>
    <property type="match status" value="1"/>
</dbReference>
<dbReference type="InterPro" id="IPR037171">
    <property type="entry name" value="NagB/RpiA_transferase-like"/>
</dbReference>
<dbReference type="InterPro" id="IPR050262">
    <property type="entry name" value="Ribose-5P_isomerase"/>
</dbReference>
<dbReference type="InterPro" id="IPR020672">
    <property type="entry name" value="Ribose5P_isomerase_typA_subgr"/>
</dbReference>
<dbReference type="InterPro" id="IPR004788">
    <property type="entry name" value="Ribose5P_isomerase_type_A"/>
</dbReference>
<dbReference type="NCBIfam" id="NF001924">
    <property type="entry name" value="PRK00702.1"/>
    <property type="match status" value="1"/>
</dbReference>
<dbReference type="NCBIfam" id="TIGR00021">
    <property type="entry name" value="rpiA"/>
    <property type="match status" value="1"/>
</dbReference>
<dbReference type="PANTHER" id="PTHR43748">
    <property type="entry name" value="RIBOSE-5-PHOSPHATE ISOMERASE 3, CHLOROPLASTIC-RELATED"/>
    <property type="match status" value="1"/>
</dbReference>
<dbReference type="PANTHER" id="PTHR43748:SF3">
    <property type="entry name" value="RIBOSE-5-PHOSPHATE ISOMERASE 3, CHLOROPLASTIC-RELATED"/>
    <property type="match status" value="1"/>
</dbReference>
<dbReference type="Pfam" id="PF06026">
    <property type="entry name" value="Rib_5-P_isom_A"/>
    <property type="match status" value="1"/>
</dbReference>
<dbReference type="SUPFAM" id="SSF75445">
    <property type="entry name" value="D-ribose-5-phosphate isomerase (RpiA), lid domain"/>
    <property type="match status" value="1"/>
</dbReference>
<dbReference type="SUPFAM" id="SSF100950">
    <property type="entry name" value="NagB/RpiA/CoA transferase-like"/>
    <property type="match status" value="1"/>
</dbReference>
<gene>
    <name evidence="1" type="primary">rpiA</name>
    <name type="ordered locus">Caur_3198</name>
</gene>
<keyword id="KW-0413">Isomerase</keyword>
<keyword id="KW-1185">Reference proteome</keyword>
<evidence type="ECO:0000255" key="1">
    <source>
        <dbReference type="HAMAP-Rule" id="MF_00170"/>
    </source>
</evidence>
<organism>
    <name type="scientific">Chloroflexus aurantiacus (strain ATCC 29366 / DSM 635 / J-10-fl)</name>
    <dbReference type="NCBI Taxonomy" id="324602"/>
    <lineage>
        <taxon>Bacteria</taxon>
        <taxon>Bacillati</taxon>
        <taxon>Chloroflexota</taxon>
        <taxon>Chloroflexia</taxon>
        <taxon>Chloroflexales</taxon>
        <taxon>Chloroflexineae</taxon>
        <taxon>Chloroflexaceae</taxon>
        <taxon>Chloroflexus</taxon>
    </lineage>
</organism>
<protein>
    <recommendedName>
        <fullName evidence="1">Ribose-5-phosphate isomerase A</fullName>
        <ecNumber evidence="1">5.3.1.6</ecNumber>
    </recommendedName>
    <alternativeName>
        <fullName evidence="1">Phosphoriboisomerase A</fullName>
        <shortName evidence="1">PRI</shortName>
    </alternativeName>
</protein>
<reference key="1">
    <citation type="journal article" date="2011" name="BMC Genomics">
        <title>Complete genome sequence of the filamentous anoxygenic phototrophic bacterium Chloroflexus aurantiacus.</title>
        <authorList>
            <person name="Tang K.H."/>
            <person name="Barry K."/>
            <person name="Chertkov O."/>
            <person name="Dalin E."/>
            <person name="Han C.S."/>
            <person name="Hauser L.J."/>
            <person name="Honchak B.M."/>
            <person name="Karbach L.E."/>
            <person name="Land M.L."/>
            <person name="Lapidus A."/>
            <person name="Larimer F.W."/>
            <person name="Mikhailova N."/>
            <person name="Pitluck S."/>
            <person name="Pierson B.K."/>
            <person name="Blankenship R.E."/>
        </authorList>
    </citation>
    <scope>NUCLEOTIDE SEQUENCE [LARGE SCALE GENOMIC DNA]</scope>
    <source>
        <strain>ATCC 29366 / DSM 635 / J-10-fl</strain>
    </source>
</reference>
<feature type="chain" id="PRO_1000194697" description="Ribose-5-phosphate isomerase A">
    <location>
        <begin position="1"/>
        <end position="239"/>
    </location>
</feature>
<feature type="active site" description="Proton acceptor" evidence="1">
    <location>
        <position position="110"/>
    </location>
</feature>
<feature type="binding site" evidence="1">
    <location>
        <begin position="31"/>
        <end position="34"/>
    </location>
    <ligand>
        <name>substrate</name>
    </ligand>
</feature>
<feature type="binding site" evidence="1">
    <location>
        <begin position="88"/>
        <end position="91"/>
    </location>
    <ligand>
        <name>substrate</name>
    </ligand>
</feature>
<feature type="binding site" evidence="1">
    <location>
        <begin position="101"/>
        <end position="104"/>
    </location>
    <ligand>
        <name>substrate</name>
    </ligand>
</feature>
<feature type="binding site" evidence="1">
    <location>
        <position position="128"/>
    </location>
    <ligand>
        <name>substrate</name>
    </ligand>
</feature>
<name>RPIA_CHLAA</name>
<sequence length="239" mass="24996">MNTTSTETRKAMAAAAAVALVRPGMVIGLGFGSTAAYATRMIAERLHQGDLNDIVGVPCAEGTAQLARELGIPLTTLDEVAAVDLTIDGADEVDPQLSLIKGGGGALLREKMVAQASRRVAIIVDDSKLSPALGTRFALPLEVVDFGWRATARWLEAQGGTVQLRLRADGQPFRTDQGNLILDWKCGPLNDPAALAAQLSARAGIVEHGLFIGLATDLFVAGPDGVQHVTTSDCGTIAW</sequence>
<comment type="function">
    <text evidence="1">Catalyzes the reversible conversion of ribose-5-phosphate to ribulose 5-phosphate.</text>
</comment>
<comment type="catalytic activity">
    <reaction evidence="1">
        <text>aldehydo-D-ribose 5-phosphate = D-ribulose 5-phosphate</text>
        <dbReference type="Rhea" id="RHEA:14657"/>
        <dbReference type="ChEBI" id="CHEBI:58121"/>
        <dbReference type="ChEBI" id="CHEBI:58273"/>
        <dbReference type="EC" id="5.3.1.6"/>
    </reaction>
</comment>
<comment type="pathway">
    <text evidence="1">Carbohydrate degradation; pentose phosphate pathway; D-ribose 5-phosphate from D-ribulose 5-phosphate (non-oxidative stage): step 1/1.</text>
</comment>
<comment type="subunit">
    <text evidence="1">Homodimer.</text>
</comment>
<comment type="similarity">
    <text evidence="1">Belongs to the ribose 5-phosphate isomerase family.</text>
</comment>